<sequence>MFQNNPLLSQLKQQLHDSKPHVEGVVKGTDKAYGFLETEKETFFIAPPAMKKVMHGDKIKAAIETIGDKKQAEPEELIEPMLTRFIAKVRFNKDKKLQVLVDHPNINQPIGAAQAKTVKQELKEGDWVVATLKTHPLRDDRFFYAQIAEFICSAEDEFAPWWVTLARHEQSRYPVQGQEVYSMLDTETRRDLTALHFVTIDSENTQDMDDALYIEPVTAPNDEQTGWKLAVAIADPTAYIALDSQIEKDARKRCFTNYLPGFNIPMLPRELSDELCSLMENETRAALVCRLETDMQGEIVGEPEFILAQVQSKAKLAYNNVSDYLEQVENAWQPENESTQQQINWLHQFALVRINWRKKHGLLFKEKPDYSFVLADNGHVREIKAEYRRIANQIVEESMIIANICCAHYLAKNAQTGIFNTHVGFDKKFLPNAHNFLMANLSNEENQQELAERYSVENLATLAGYCRMRHDIEPIEGDYLEFRLRRFLTFAEFKSELAPHFGLGLTGYATWTSPIRKYSDMVNHRLIKACLANRECVKPSDETLARLQEARKQNRMVERDIADWLYCRYLADKVESNPEFRAEVQDCMRGGLRVQLLENGASVFVPASSIHPNKDEIQVNTDELALYINGERRYKIGDIVNIRLTEVKEETRSLIGNLV</sequence>
<dbReference type="EC" id="3.1.13.1" evidence="2"/>
<dbReference type="EMBL" id="AE016827">
    <property type="protein sequence ID" value="AAU38075.1"/>
    <property type="molecule type" value="Genomic_DNA"/>
</dbReference>
<dbReference type="RefSeq" id="WP_011200641.1">
    <property type="nucleotide sequence ID" value="NC_006300.1"/>
</dbReference>
<dbReference type="SMR" id="Q65SI5"/>
<dbReference type="STRING" id="221988.MS1468"/>
<dbReference type="KEGG" id="msu:MS1468"/>
<dbReference type="eggNOG" id="COG4776">
    <property type="taxonomic scope" value="Bacteria"/>
</dbReference>
<dbReference type="HOGENOM" id="CLU_002333_7_3_6"/>
<dbReference type="OrthoDB" id="9764149at2"/>
<dbReference type="Proteomes" id="UP000000607">
    <property type="component" value="Chromosome"/>
</dbReference>
<dbReference type="GO" id="GO:0005829">
    <property type="term" value="C:cytosol"/>
    <property type="evidence" value="ECO:0007669"/>
    <property type="project" value="TreeGrafter"/>
</dbReference>
<dbReference type="GO" id="GO:0008859">
    <property type="term" value="F:exoribonuclease II activity"/>
    <property type="evidence" value="ECO:0007669"/>
    <property type="project" value="UniProtKB-UniRule"/>
</dbReference>
<dbReference type="GO" id="GO:0003723">
    <property type="term" value="F:RNA binding"/>
    <property type="evidence" value="ECO:0007669"/>
    <property type="project" value="UniProtKB-KW"/>
</dbReference>
<dbReference type="GO" id="GO:0006402">
    <property type="term" value="P:mRNA catabolic process"/>
    <property type="evidence" value="ECO:0007669"/>
    <property type="project" value="UniProtKB-UniRule"/>
</dbReference>
<dbReference type="Gene3D" id="2.40.50.640">
    <property type="match status" value="1"/>
</dbReference>
<dbReference type="Gene3D" id="2.40.50.140">
    <property type="entry name" value="Nucleic acid-binding proteins"/>
    <property type="match status" value="2"/>
</dbReference>
<dbReference type="HAMAP" id="MF_01036">
    <property type="entry name" value="RNase_II"/>
    <property type="match status" value="1"/>
</dbReference>
<dbReference type="InterPro" id="IPR011129">
    <property type="entry name" value="CSD"/>
</dbReference>
<dbReference type="InterPro" id="IPR012340">
    <property type="entry name" value="NA-bd_OB-fold"/>
</dbReference>
<dbReference type="InterPro" id="IPR013223">
    <property type="entry name" value="RNase_B_OB_dom"/>
</dbReference>
<dbReference type="InterPro" id="IPR011804">
    <property type="entry name" value="RNase_II"/>
</dbReference>
<dbReference type="InterPro" id="IPR001900">
    <property type="entry name" value="RNase_II/R"/>
</dbReference>
<dbReference type="InterPro" id="IPR022966">
    <property type="entry name" value="RNase_II/R_CS"/>
</dbReference>
<dbReference type="InterPro" id="IPR004476">
    <property type="entry name" value="RNase_II/RNase_R"/>
</dbReference>
<dbReference type="InterPro" id="IPR050180">
    <property type="entry name" value="RNR_Ribonuclease"/>
</dbReference>
<dbReference type="InterPro" id="IPR003029">
    <property type="entry name" value="S1_domain"/>
</dbReference>
<dbReference type="NCBIfam" id="TIGR00358">
    <property type="entry name" value="3_prime_RNase"/>
    <property type="match status" value="1"/>
</dbReference>
<dbReference type="NCBIfam" id="NF003455">
    <property type="entry name" value="PRK05054.1"/>
    <property type="match status" value="1"/>
</dbReference>
<dbReference type="NCBIfam" id="TIGR02062">
    <property type="entry name" value="RNase_B"/>
    <property type="match status" value="1"/>
</dbReference>
<dbReference type="PANTHER" id="PTHR23355:SF37">
    <property type="entry name" value="EXORIBONUCLEASE 2"/>
    <property type="match status" value="1"/>
</dbReference>
<dbReference type="PANTHER" id="PTHR23355">
    <property type="entry name" value="RIBONUCLEASE"/>
    <property type="match status" value="1"/>
</dbReference>
<dbReference type="Pfam" id="PF08206">
    <property type="entry name" value="OB_RNB"/>
    <property type="match status" value="1"/>
</dbReference>
<dbReference type="Pfam" id="PF00773">
    <property type="entry name" value="RNB"/>
    <property type="match status" value="1"/>
</dbReference>
<dbReference type="Pfam" id="PF00575">
    <property type="entry name" value="S1"/>
    <property type="match status" value="1"/>
</dbReference>
<dbReference type="SMART" id="SM00357">
    <property type="entry name" value="CSP"/>
    <property type="match status" value="1"/>
</dbReference>
<dbReference type="SMART" id="SM00955">
    <property type="entry name" value="RNB"/>
    <property type="match status" value="1"/>
</dbReference>
<dbReference type="SMART" id="SM00316">
    <property type="entry name" value="S1"/>
    <property type="match status" value="1"/>
</dbReference>
<dbReference type="SUPFAM" id="SSF50249">
    <property type="entry name" value="Nucleic acid-binding proteins"/>
    <property type="match status" value="4"/>
</dbReference>
<dbReference type="PROSITE" id="PS01175">
    <property type="entry name" value="RIBONUCLEASE_II"/>
    <property type="match status" value="1"/>
</dbReference>
<dbReference type="PROSITE" id="PS50126">
    <property type="entry name" value="S1"/>
    <property type="match status" value="1"/>
</dbReference>
<proteinExistence type="inferred from homology"/>
<reference key="1">
    <citation type="journal article" date="2004" name="Nat. Biotechnol.">
        <title>The genome sequence of the capnophilic rumen bacterium Mannheimia succiniciproducens.</title>
        <authorList>
            <person name="Hong S.H."/>
            <person name="Kim J.S."/>
            <person name="Lee S.Y."/>
            <person name="In Y.H."/>
            <person name="Choi S.S."/>
            <person name="Rih J.-K."/>
            <person name="Kim C.H."/>
            <person name="Jeong H."/>
            <person name="Hur C.G."/>
            <person name="Kim J.J."/>
        </authorList>
    </citation>
    <scope>NUCLEOTIDE SEQUENCE [LARGE SCALE GENOMIC DNA]</scope>
    <source>
        <strain>KCTC 0769BP / MBEL55E</strain>
    </source>
</reference>
<comment type="function">
    <text evidence="2">Involved in mRNA degradation. Hydrolyzes single-stranded polyribonucleotides processively in the 3' to 5' direction.</text>
</comment>
<comment type="catalytic activity">
    <reaction evidence="2">
        <text>Exonucleolytic cleavage in the 3'- to 5'-direction to yield nucleoside 5'-phosphates.</text>
        <dbReference type="EC" id="3.1.13.1"/>
    </reaction>
</comment>
<comment type="subcellular location">
    <subcellularLocation>
        <location evidence="2">Cytoplasm</location>
    </subcellularLocation>
</comment>
<comment type="similarity">
    <text evidence="2">Belongs to the RNR ribonuclease family. RNase II subfamily.</text>
</comment>
<feature type="chain" id="PRO_1000063894" description="Exoribonuclease 2">
    <location>
        <begin position="1"/>
        <end position="659"/>
    </location>
</feature>
<feature type="domain" description="RNB" evidence="1">
    <location>
        <begin position="189"/>
        <end position="532"/>
    </location>
</feature>
<feature type="domain" description="S1 motif" evidence="2">
    <location>
        <begin position="577"/>
        <end position="659"/>
    </location>
</feature>
<keyword id="KW-0963">Cytoplasm</keyword>
<keyword id="KW-0269">Exonuclease</keyword>
<keyword id="KW-0378">Hydrolase</keyword>
<keyword id="KW-0540">Nuclease</keyword>
<keyword id="KW-0694">RNA-binding</keyword>
<accession>Q65SI5</accession>
<gene>
    <name evidence="2" type="primary">rnb</name>
    <name type="ordered locus">MS1468</name>
</gene>
<protein>
    <recommendedName>
        <fullName evidence="2">Exoribonuclease 2</fullName>
        <ecNumber evidence="2">3.1.13.1</ecNumber>
    </recommendedName>
    <alternativeName>
        <fullName evidence="2">Exoribonuclease II</fullName>
        <shortName evidence="2">RNase II</shortName>
        <shortName evidence="2">Ribonuclease II</shortName>
    </alternativeName>
</protein>
<organism>
    <name type="scientific">Mannheimia succiniciproducens (strain KCTC 0769BP / MBEL55E)</name>
    <dbReference type="NCBI Taxonomy" id="221988"/>
    <lineage>
        <taxon>Bacteria</taxon>
        <taxon>Pseudomonadati</taxon>
        <taxon>Pseudomonadota</taxon>
        <taxon>Gammaproteobacteria</taxon>
        <taxon>Pasteurellales</taxon>
        <taxon>Pasteurellaceae</taxon>
        <taxon>Basfia</taxon>
    </lineage>
</organism>
<name>RNB_MANSM</name>
<evidence type="ECO:0000255" key="1"/>
<evidence type="ECO:0000255" key="2">
    <source>
        <dbReference type="HAMAP-Rule" id="MF_01036"/>
    </source>
</evidence>